<gene>
    <name evidence="1" type="primary">rplW</name>
    <name type="ordered locus">CF0911</name>
</gene>
<reference key="1">
    <citation type="journal article" date="2006" name="DNA Res.">
        <title>Genome sequence of the cat pathogen, Chlamydophila felis.</title>
        <authorList>
            <person name="Azuma Y."/>
            <person name="Hirakawa H."/>
            <person name="Yamashita A."/>
            <person name="Cai Y."/>
            <person name="Rahman M.A."/>
            <person name="Suzuki H."/>
            <person name="Mitaku S."/>
            <person name="Toh H."/>
            <person name="Goto S."/>
            <person name="Murakami T."/>
            <person name="Sugi K."/>
            <person name="Hayashi H."/>
            <person name="Fukushi H."/>
            <person name="Hattori M."/>
            <person name="Kuhara S."/>
            <person name="Shirai M."/>
        </authorList>
    </citation>
    <scope>NUCLEOTIDE SEQUENCE [LARGE SCALE GENOMIC DNA]</scope>
    <source>
        <strain>Fe/C-56</strain>
    </source>
</reference>
<dbReference type="EMBL" id="AP006861">
    <property type="protein sequence ID" value="BAE81683.1"/>
    <property type="molecule type" value="Genomic_DNA"/>
</dbReference>
<dbReference type="RefSeq" id="WP_011458456.1">
    <property type="nucleotide sequence ID" value="NC_007899.1"/>
</dbReference>
<dbReference type="SMR" id="Q252V5"/>
<dbReference type="STRING" id="264202.CF0911"/>
<dbReference type="KEGG" id="cfe:CF0911"/>
<dbReference type="eggNOG" id="COG0089">
    <property type="taxonomic scope" value="Bacteria"/>
</dbReference>
<dbReference type="HOGENOM" id="CLU_037562_3_1_0"/>
<dbReference type="OrthoDB" id="9793353at2"/>
<dbReference type="Proteomes" id="UP000001260">
    <property type="component" value="Chromosome"/>
</dbReference>
<dbReference type="GO" id="GO:1990904">
    <property type="term" value="C:ribonucleoprotein complex"/>
    <property type="evidence" value="ECO:0007669"/>
    <property type="project" value="UniProtKB-KW"/>
</dbReference>
<dbReference type="GO" id="GO:0005840">
    <property type="term" value="C:ribosome"/>
    <property type="evidence" value="ECO:0007669"/>
    <property type="project" value="UniProtKB-KW"/>
</dbReference>
<dbReference type="GO" id="GO:0019843">
    <property type="term" value="F:rRNA binding"/>
    <property type="evidence" value="ECO:0007669"/>
    <property type="project" value="UniProtKB-UniRule"/>
</dbReference>
<dbReference type="GO" id="GO:0003735">
    <property type="term" value="F:structural constituent of ribosome"/>
    <property type="evidence" value="ECO:0007669"/>
    <property type="project" value="InterPro"/>
</dbReference>
<dbReference type="GO" id="GO:0006412">
    <property type="term" value="P:translation"/>
    <property type="evidence" value="ECO:0007669"/>
    <property type="project" value="UniProtKB-UniRule"/>
</dbReference>
<dbReference type="Gene3D" id="3.30.70.330">
    <property type="match status" value="1"/>
</dbReference>
<dbReference type="HAMAP" id="MF_01369_B">
    <property type="entry name" value="Ribosomal_uL23_B"/>
    <property type="match status" value="1"/>
</dbReference>
<dbReference type="InterPro" id="IPR012677">
    <property type="entry name" value="Nucleotide-bd_a/b_plait_sf"/>
</dbReference>
<dbReference type="InterPro" id="IPR013025">
    <property type="entry name" value="Ribosomal_uL23-like"/>
</dbReference>
<dbReference type="InterPro" id="IPR012678">
    <property type="entry name" value="Ribosomal_uL23/eL15/eS24_sf"/>
</dbReference>
<dbReference type="NCBIfam" id="NF004362">
    <property type="entry name" value="PRK05738.2-2"/>
    <property type="match status" value="1"/>
</dbReference>
<dbReference type="Pfam" id="PF00276">
    <property type="entry name" value="Ribosomal_L23"/>
    <property type="match status" value="1"/>
</dbReference>
<dbReference type="SUPFAM" id="SSF54189">
    <property type="entry name" value="Ribosomal proteins S24e, L23 and L15e"/>
    <property type="match status" value="1"/>
</dbReference>
<accession>Q252V5</accession>
<organism>
    <name type="scientific">Chlamydia felis (strain Fe/C-56)</name>
    <name type="common">Chlamydophila felis</name>
    <dbReference type="NCBI Taxonomy" id="264202"/>
    <lineage>
        <taxon>Bacteria</taxon>
        <taxon>Pseudomonadati</taxon>
        <taxon>Chlamydiota</taxon>
        <taxon>Chlamydiia</taxon>
        <taxon>Chlamydiales</taxon>
        <taxon>Chlamydiaceae</taxon>
        <taxon>Chlamydia/Chlamydophila group</taxon>
        <taxon>Chlamydia</taxon>
    </lineage>
</organism>
<proteinExistence type="inferred from homology"/>
<feature type="chain" id="PRO_1000068059" description="Large ribosomal subunit protein uL23">
    <location>
        <begin position="1"/>
        <end position="111"/>
    </location>
</feature>
<evidence type="ECO:0000255" key="1">
    <source>
        <dbReference type="HAMAP-Rule" id="MF_01369"/>
    </source>
</evidence>
<evidence type="ECO:0000305" key="2"/>
<comment type="function">
    <text evidence="1">One of the early assembly proteins it binds 23S rRNA. One of the proteins that surrounds the polypeptide exit tunnel on the outside of the ribosome. Forms the main docking site for trigger factor binding to the ribosome.</text>
</comment>
<comment type="subunit">
    <text evidence="1">Part of the 50S ribosomal subunit. Contacts protein L29, and trigger factor when it is bound to the ribosome.</text>
</comment>
<comment type="similarity">
    <text evidence="1">Belongs to the universal ribosomal protein uL23 family.</text>
</comment>
<name>RL23_CHLFF</name>
<sequence length="111" mass="12280">MKDPYDVIKRHYVTEKAKTLEGLSLGSGEGKKKGSFCKHPKYTFIVACDATKPLIAQALESIYADKKVKVKSVNTICVKPQPARMFRGKRKGKTAGFKKAVVTFYEGHSIG</sequence>
<protein>
    <recommendedName>
        <fullName evidence="1">Large ribosomal subunit protein uL23</fullName>
    </recommendedName>
    <alternativeName>
        <fullName evidence="2">50S ribosomal protein L23</fullName>
    </alternativeName>
</protein>
<keyword id="KW-0687">Ribonucleoprotein</keyword>
<keyword id="KW-0689">Ribosomal protein</keyword>
<keyword id="KW-0694">RNA-binding</keyword>
<keyword id="KW-0699">rRNA-binding</keyword>